<dbReference type="EMBL" id="AC004557">
    <property type="protein sequence ID" value="AAF99740.1"/>
    <property type="status" value="ALT_SEQ"/>
    <property type="molecule type" value="Genomic_DNA"/>
</dbReference>
<dbReference type="EMBL" id="CP002684">
    <property type="protein sequence ID" value="AEE30839.1"/>
    <property type="molecule type" value="Genomic_DNA"/>
</dbReference>
<dbReference type="EMBL" id="AK117937">
    <property type="protein sequence ID" value="BAC42575.1"/>
    <property type="molecule type" value="mRNA"/>
</dbReference>
<dbReference type="EMBL" id="BT005939">
    <property type="protein sequence ID" value="AAO64874.1"/>
    <property type="molecule type" value="mRNA"/>
</dbReference>
<dbReference type="RefSeq" id="NP_174070.1">
    <property type="nucleotide sequence ID" value="NM_102514.4"/>
</dbReference>
<dbReference type="SMR" id="F4HSX9"/>
<dbReference type="FunCoup" id="F4HSX9">
    <property type="interactions" value="7"/>
</dbReference>
<dbReference type="STRING" id="3702.F4HSX9"/>
<dbReference type="iPTMnet" id="F4HSX9"/>
<dbReference type="PaxDb" id="3702-AT1G27500.1"/>
<dbReference type="ProteomicsDB" id="247168"/>
<dbReference type="EnsemblPlants" id="AT1G27500.1">
    <property type="protein sequence ID" value="AT1G27500.1"/>
    <property type="gene ID" value="AT1G27500"/>
</dbReference>
<dbReference type="GeneID" id="839641"/>
<dbReference type="Gramene" id="AT1G27500.1">
    <property type="protein sequence ID" value="AT1G27500.1"/>
    <property type="gene ID" value="AT1G27500"/>
</dbReference>
<dbReference type="KEGG" id="ath:AT1G27500"/>
<dbReference type="Araport" id="AT1G27500"/>
<dbReference type="TAIR" id="AT1G27500">
    <property type="gene designation" value="KLCR3"/>
</dbReference>
<dbReference type="eggNOG" id="KOG1840">
    <property type="taxonomic scope" value="Eukaryota"/>
</dbReference>
<dbReference type="HOGENOM" id="CLU_021284_1_0_1"/>
<dbReference type="InParanoid" id="F4HSX9"/>
<dbReference type="OMA" id="YNEAEVM"/>
<dbReference type="PRO" id="PR:F4HSX9"/>
<dbReference type="Proteomes" id="UP000006548">
    <property type="component" value="Chromosome 1"/>
</dbReference>
<dbReference type="ExpressionAtlas" id="F4HSX9">
    <property type="expression patterns" value="baseline and differential"/>
</dbReference>
<dbReference type="Gene3D" id="1.25.40.10">
    <property type="entry name" value="Tetratricopeptide repeat domain"/>
    <property type="match status" value="4"/>
</dbReference>
<dbReference type="InterPro" id="IPR011990">
    <property type="entry name" value="TPR-like_helical_dom_sf"/>
</dbReference>
<dbReference type="InterPro" id="IPR019734">
    <property type="entry name" value="TPR_rpt"/>
</dbReference>
<dbReference type="PANTHER" id="PTHR46284">
    <property type="entry name" value="PROTEIN KINESIN LIGHT CHAIN-RELATED 3"/>
    <property type="match status" value="1"/>
</dbReference>
<dbReference type="PANTHER" id="PTHR46284:SF5">
    <property type="entry name" value="PROTEIN KINESIN LIGHT CHAIN-RELATED 3"/>
    <property type="match status" value="1"/>
</dbReference>
<dbReference type="Pfam" id="PF13424">
    <property type="entry name" value="TPR_12"/>
    <property type="match status" value="2"/>
</dbReference>
<dbReference type="SMART" id="SM00028">
    <property type="entry name" value="TPR"/>
    <property type="match status" value="10"/>
</dbReference>
<dbReference type="SUPFAM" id="SSF48452">
    <property type="entry name" value="TPR-like"/>
    <property type="match status" value="2"/>
</dbReference>
<dbReference type="PROSITE" id="PS50293">
    <property type="entry name" value="TPR_REGION"/>
    <property type="match status" value="2"/>
</dbReference>
<name>KLCR3_ARATH</name>
<gene>
    <name evidence="3" type="primary">KLCR3</name>
    <name evidence="5" type="ordered locus">At1g27500</name>
    <name evidence="6" type="ORF">F17L21.29</name>
</gene>
<sequence>MEGGSVNESHSNADQMFDTTIEELCKNLCELQSSNQSPSRQSFGSYGDESKIDSDLQHLALGEMRDIDILEDEGDEDEVAKPEEFDVKSNSSNLDLEVMPRDMEKQTGKKNVTKSNVGVGGMRKKKVGGTKLQNGNEEPSSENVELARFLLNQARNLVSSGDSTHKALELTHRAAKLFEASAENGKPCLEWIMCLHVTAAVHCKLKEYNEAIPVLQRSVEIPVVEEGEEHALAKFAGLMQLGDTYAMVGQLESSISCYTEGLNIQKKVLGENDPRVGETCRYLAEALVQALRFDEAQQVCETALSIHRESGLPGSIAEAADRRLMGLICETKGDHENALEHLVLASMAMAANGQESEVAFVDTSIGDSYLSLSRFDEAICAYQKSLTALKTAKGENHPAVGSVYIRLADLYNRTGKVREAKSYCENALRIYESHNLEISPEEIASGLTDISVICESMNEVEQAITLLQKALKIYADSPGQKIMIAGIEAQMGVLYYMMGKYMESYNTFKSAISKLRATGKKQSTFFGIALNQMGLACIQLDAIEEAVELFEEAKCILEQECGPYHPETLGLYSNLAGAYDAIGRLDDAIKLLGHVVGVREEKLGTANPVTEDEKRRLAQLLKEAGNVTGRKAKSLKTLIDSDLTSSSALR</sequence>
<feature type="chain" id="PRO_0000438249" description="Protein KINESIN LIGHT CHAIN-RELATED 3">
    <location>
        <begin position="1"/>
        <end position="650"/>
    </location>
</feature>
<feature type="repeat" description="TPR 1" evidence="1">
    <location>
        <begin position="192"/>
        <end position="225"/>
    </location>
</feature>
<feature type="repeat" description="TPR 2" evidence="1">
    <location>
        <begin position="235"/>
        <end position="268"/>
    </location>
</feature>
<feature type="repeat" description="TPR 3" evidence="1">
    <location>
        <begin position="277"/>
        <end position="310"/>
    </location>
</feature>
<feature type="repeat" description="TPR 4" evidence="1">
    <location>
        <begin position="319"/>
        <end position="353"/>
    </location>
</feature>
<feature type="repeat" description="TPR 5" evidence="1">
    <location>
        <begin position="359"/>
        <end position="392"/>
    </location>
</feature>
<feature type="repeat" description="TPR 6" evidence="1">
    <location>
        <begin position="401"/>
        <end position="434"/>
    </location>
</feature>
<feature type="repeat" description="TPR 7" evidence="1">
    <location>
        <begin position="444"/>
        <end position="477"/>
    </location>
</feature>
<feature type="repeat" description="TPR 8" evidence="1">
    <location>
        <begin position="485"/>
        <end position="518"/>
    </location>
</feature>
<feature type="repeat" description="TPR 9" evidence="1">
    <location>
        <begin position="527"/>
        <end position="560"/>
    </location>
</feature>
<feature type="repeat" description="TPR 10" evidence="1">
    <location>
        <begin position="569"/>
        <end position="602"/>
    </location>
</feature>
<feature type="region of interest" description="Disordered" evidence="2">
    <location>
        <begin position="104"/>
        <end position="141"/>
    </location>
</feature>
<feature type="compositionally biased region" description="Polar residues" evidence="2">
    <location>
        <begin position="131"/>
        <end position="141"/>
    </location>
</feature>
<feature type="sequence conflict" description="In Ref. 3; BAC42575 and 4; AAO64874." evidence="4" ref="3 4">
    <original>E</original>
    <variation>G</variation>
    <location>
        <position position="73"/>
    </location>
</feature>
<reference key="1">
    <citation type="journal article" date="2000" name="Nature">
        <title>Sequence and analysis of chromosome 1 of the plant Arabidopsis thaliana.</title>
        <authorList>
            <person name="Theologis A."/>
            <person name="Ecker J.R."/>
            <person name="Palm C.J."/>
            <person name="Federspiel N.A."/>
            <person name="Kaul S."/>
            <person name="White O."/>
            <person name="Alonso J."/>
            <person name="Altafi H."/>
            <person name="Araujo R."/>
            <person name="Bowman C.L."/>
            <person name="Brooks S.Y."/>
            <person name="Buehler E."/>
            <person name="Chan A."/>
            <person name="Chao Q."/>
            <person name="Chen H."/>
            <person name="Cheuk R.F."/>
            <person name="Chin C.W."/>
            <person name="Chung M.K."/>
            <person name="Conn L."/>
            <person name="Conway A.B."/>
            <person name="Conway A.R."/>
            <person name="Creasy T.H."/>
            <person name="Dewar K."/>
            <person name="Dunn P."/>
            <person name="Etgu P."/>
            <person name="Feldblyum T.V."/>
            <person name="Feng J.-D."/>
            <person name="Fong B."/>
            <person name="Fujii C.Y."/>
            <person name="Gill J.E."/>
            <person name="Goldsmith A.D."/>
            <person name="Haas B."/>
            <person name="Hansen N.F."/>
            <person name="Hughes B."/>
            <person name="Huizar L."/>
            <person name="Hunter J.L."/>
            <person name="Jenkins J."/>
            <person name="Johnson-Hopson C."/>
            <person name="Khan S."/>
            <person name="Khaykin E."/>
            <person name="Kim C.J."/>
            <person name="Koo H.L."/>
            <person name="Kremenetskaia I."/>
            <person name="Kurtz D.B."/>
            <person name="Kwan A."/>
            <person name="Lam B."/>
            <person name="Langin-Hooper S."/>
            <person name="Lee A."/>
            <person name="Lee J.M."/>
            <person name="Lenz C.A."/>
            <person name="Li J.H."/>
            <person name="Li Y.-P."/>
            <person name="Lin X."/>
            <person name="Liu S.X."/>
            <person name="Liu Z.A."/>
            <person name="Luros J.S."/>
            <person name="Maiti R."/>
            <person name="Marziali A."/>
            <person name="Militscher J."/>
            <person name="Miranda M."/>
            <person name="Nguyen M."/>
            <person name="Nierman W.C."/>
            <person name="Osborne B.I."/>
            <person name="Pai G."/>
            <person name="Peterson J."/>
            <person name="Pham P.K."/>
            <person name="Rizzo M."/>
            <person name="Rooney T."/>
            <person name="Rowley D."/>
            <person name="Sakano H."/>
            <person name="Salzberg S.L."/>
            <person name="Schwartz J.R."/>
            <person name="Shinn P."/>
            <person name="Southwick A.M."/>
            <person name="Sun H."/>
            <person name="Tallon L.J."/>
            <person name="Tambunga G."/>
            <person name="Toriumi M.J."/>
            <person name="Town C.D."/>
            <person name="Utterback T."/>
            <person name="Van Aken S."/>
            <person name="Vaysberg M."/>
            <person name="Vysotskaia V.S."/>
            <person name="Walker M."/>
            <person name="Wu D."/>
            <person name="Yu G."/>
            <person name="Fraser C.M."/>
            <person name="Venter J.C."/>
            <person name="Davis R.W."/>
        </authorList>
    </citation>
    <scope>NUCLEOTIDE SEQUENCE [LARGE SCALE GENOMIC DNA]</scope>
    <source>
        <strain>cv. Columbia</strain>
    </source>
</reference>
<reference key="2">
    <citation type="journal article" date="2017" name="Plant J.">
        <title>Araport11: a complete reannotation of the Arabidopsis thaliana reference genome.</title>
        <authorList>
            <person name="Cheng C.Y."/>
            <person name="Krishnakumar V."/>
            <person name="Chan A.P."/>
            <person name="Thibaud-Nissen F."/>
            <person name="Schobel S."/>
            <person name="Town C.D."/>
        </authorList>
    </citation>
    <scope>GENOME REANNOTATION</scope>
    <source>
        <strain>cv. Columbia</strain>
    </source>
</reference>
<reference key="3">
    <citation type="journal article" date="2002" name="Science">
        <title>Functional annotation of a full-length Arabidopsis cDNA collection.</title>
        <authorList>
            <person name="Seki M."/>
            <person name="Narusaka M."/>
            <person name="Kamiya A."/>
            <person name="Ishida J."/>
            <person name="Satou M."/>
            <person name="Sakurai T."/>
            <person name="Nakajima M."/>
            <person name="Enju A."/>
            <person name="Akiyama K."/>
            <person name="Oono Y."/>
            <person name="Muramatsu M."/>
            <person name="Hayashizaki Y."/>
            <person name="Kawai J."/>
            <person name="Carninci P."/>
            <person name="Itoh M."/>
            <person name="Ishii Y."/>
            <person name="Arakawa T."/>
            <person name="Shibata K."/>
            <person name="Shinagawa A."/>
            <person name="Shinozaki K."/>
        </authorList>
    </citation>
    <scope>NUCLEOTIDE SEQUENCE [LARGE SCALE MRNA]</scope>
    <source>
        <strain>cv. Columbia</strain>
    </source>
</reference>
<reference key="4">
    <citation type="journal article" date="2003" name="Science">
        <title>Empirical analysis of transcriptional activity in the Arabidopsis genome.</title>
        <authorList>
            <person name="Yamada K."/>
            <person name="Lim J."/>
            <person name="Dale J.M."/>
            <person name="Chen H."/>
            <person name="Shinn P."/>
            <person name="Palm C.J."/>
            <person name="Southwick A.M."/>
            <person name="Wu H.C."/>
            <person name="Kim C.J."/>
            <person name="Nguyen M."/>
            <person name="Pham P.K."/>
            <person name="Cheuk R.F."/>
            <person name="Karlin-Newmann G."/>
            <person name="Liu S.X."/>
            <person name="Lam B."/>
            <person name="Sakano H."/>
            <person name="Wu T."/>
            <person name="Yu G."/>
            <person name="Miranda M."/>
            <person name="Quach H.L."/>
            <person name="Tripp M."/>
            <person name="Chang C.H."/>
            <person name="Lee J.M."/>
            <person name="Toriumi M.J."/>
            <person name="Chan M.M."/>
            <person name="Tang C.C."/>
            <person name="Onodera C.S."/>
            <person name="Deng J.M."/>
            <person name="Akiyama K."/>
            <person name="Ansari Y."/>
            <person name="Arakawa T."/>
            <person name="Banh J."/>
            <person name="Banno F."/>
            <person name="Bowser L."/>
            <person name="Brooks S.Y."/>
            <person name="Carninci P."/>
            <person name="Chao Q."/>
            <person name="Choy N."/>
            <person name="Enju A."/>
            <person name="Goldsmith A.D."/>
            <person name="Gurjal M."/>
            <person name="Hansen N.F."/>
            <person name="Hayashizaki Y."/>
            <person name="Johnson-Hopson C."/>
            <person name="Hsuan V.W."/>
            <person name="Iida K."/>
            <person name="Karnes M."/>
            <person name="Khan S."/>
            <person name="Koesema E."/>
            <person name="Ishida J."/>
            <person name="Jiang P.X."/>
            <person name="Jones T."/>
            <person name="Kawai J."/>
            <person name="Kamiya A."/>
            <person name="Meyers C."/>
            <person name="Nakajima M."/>
            <person name="Narusaka M."/>
            <person name="Seki M."/>
            <person name="Sakurai T."/>
            <person name="Satou M."/>
            <person name="Tamse R."/>
            <person name="Vaysberg M."/>
            <person name="Wallender E.K."/>
            <person name="Wong C."/>
            <person name="Yamamura Y."/>
            <person name="Yuan S."/>
            <person name="Shinozaki K."/>
            <person name="Davis R.W."/>
            <person name="Theologis A."/>
            <person name="Ecker J.R."/>
        </authorList>
    </citation>
    <scope>NUCLEOTIDE SEQUENCE [LARGE SCALE MRNA]</scope>
    <source>
        <strain>cv. Columbia</strain>
    </source>
</reference>
<reference key="5">
    <citation type="journal article" date="2013" name="J. Biol. Chem.">
        <title>Arabidopsis calmodulin-binding protein IQ67-domain 1 localizes to microtubules and interacts with kinesin light chain-related protein-1.</title>
        <authorList>
            <person name="Buerstenbinder K."/>
            <person name="Savchenko T."/>
            <person name="Mueller J."/>
            <person name="Adamson A.W."/>
            <person name="Stamm G."/>
            <person name="Kwong R."/>
            <person name="Zipp B.J."/>
            <person name="Dinesh D.C."/>
            <person name="Abel S."/>
        </authorList>
    </citation>
    <scope>GENE FAMILY</scope>
    <scope>NOMENCLATURE</scope>
</reference>
<comment type="similarity">
    <text evidence="4">Belongs to the kinesin light chain family.</text>
</comment>
<comment type="sequence caution" evidence="4">
    <conflict type="erroneous gene model prediction">
        <sequence resource="EMBL-CDS" id="AAF99740"/>
    </conflict>
</comment>
<proteinExistence type="evidence at transcript level"/>
<accession>F4HSX9</accession>
<accession>Q8GY05</accession>
<accession>Q9FZI6</accession>
<evidence type="ECO:0000255" key="1"/>
<evidence type="ECO:0000256" key="2">
    <source>
        <dbReference type="SAM" id="MobiDB-lite"/>
    </source>
</evidence>
<evidence type="ECO:0000303" key="3">
    <source>
    </source>
</evidence>
<evidence type="ECO:0000305" key="4"/>
<evidence type="ECO:0000312" key="5">
    <source>
        <dbReference type="Araport" id="AT1G27500"/>
    </source>
</evidence>
<evidence type="ECO:0000312" key="6">
    <source>
        <dbReference type="EMBL" id="AAF99740.1"/>
    </source>
</evidence>
<organism>
    <name type="scientific">Arabidopsis thaliana</name>
    <name type="common">Mouse-ear cress</name>
    <dbReference type="NCBI Taxonomy" id="3702"/>
    <lineage>
        <taxon>Eukaryota</taxon>
        <taxon>Viridiplantae</taxon>
        <taxon>Streptophyta</taxon>
        <taxon>Embryophyta</taxon>
        <taxon>Tracheophyta</taxon>
        <taxon>Spermatophyta</taxon>
        <taxon>Magnoliopsida</taxon>
        <taxon>eudicotyledons</taxon>
        <taxon>Gunneridae</taxon>
        <taxon>Pentapetalae</taxon>
        <taxon>rosids</taxon>
        <taxon>malvids</taxon>
        <taxon>Brassicales</taxon>
        <taxon>Brassicaceae</taxon>
        <taxon>Camelineae</taxon>
        <taxon>Arabidopsis</taxon>
    </lineage>
</organism>
<protein>
    <recommendedName>
        <fullName evidence="3">Protein KINESIN LIGHT CHAIN-RELATED 3</fullName>
    </recommendedName>
</protein>
<keyword id="KW-1185">Reference proteome</keyword>
<keyword id="KW-0677">Repeat</keyword>
<keyword id="KW-0802">TPR repeat</keyword>